<feature type="chain" id="PRO_1000214616" description="Large ribosomal subunit protein uL22">
    <location>
        <begin position="1"/>
        <end position="114"/>
    </location>
</feature>
<protein>
    <recommendedName>
        <fullName evidence="1">Large ribosomal subunit protein uL22</fullName>
    </recommendedName>
    <alternativeName>
        <fullName evidence="2">50S ribosomal protein L22</fullName>
    </alternativeName>
</protein>
<keyword id="KW-0687">Ribonucleoprotein</keyword>
<keyword id="KW-0689">Ribosomal protein</keyword>
<keyword id="KW-0694">RNA-binding</keyword>
<keyword id="KW-0699">rRNA-binding</keyword>
<sequence length="114" mass="12431">MAEITSAKAMARTVRVSPRKTRLVLDLIRGKKVADAIAILKFTPNKAARVIEKTLNSAIANAENNFGLEKANLVVSETFANEGPTMKRFRPRAKGSASPINKRTTHVTVVVSEK</sequence>
<name>RL22_STRS7</name>
<accession>C0MCB5</accession>
<organism>
    <name type="scientific">Streptococcus equi subsp. zooepidemicus (strain H70)</name>
    <dbReference type="NCBI Taxonomy" id="553483"/>
    <lineage>
        <taxon>Bacteria</taxon>
        <taxon>Bacillati</taxon>
        <taxon>Bacillota</taxon>
        <taxon>Bacilli</taxon>
        <taxon>Lactobacillales</taxon>
        <taxon>Streptococcaceae</taxon>
        <taxon>Streptococcus</taxon>
    </lineage>
</organism>
<reference key="1">
    <citation type="journal article" date="2009" name="PLoS Pathog.">
        <title>Genomic evidence for the evolution of Streptococcus equi: host restriction, increased virulence, and genetic exchange with human pathogens.</title>
        <authorList>
            <person name="Holden M.T.G."/>
            <person name="Heather Z."/>
            <person name="Paillot R."/>
            <person name="Steward K.F."/>
            <person name="Webb K."/>
            <person name="Ainslie F."/>
            <person name="Jourdan T."/>
            <person name="Bason N.C."/>
            <person name="Holroyd N.E."/>
            <person name="Mungall K."/>
            <person name="Quail M.A."/>
            <person name="Sanders M."/>
            <person name="Simmonds M."/>
            <person name="Willey D."/>
            <person name="Brooks K."/>
            <person name="Aanensen D.M."/>
            <person name="Spratt B.G."/>
            <person name="Jolley K.A."/>
            <person name="Maiden M.C.J."/>
            <person name="Kehoe M."/>
            <person name="Chanter N."/>
            <person name="Bentley S.D."/>
            <person name="Robinson C."/>
            <person name="Maskell D.J."/>
            <person name="Parkhill J."/>
            <person name="Waller A.S."/>
        </authorList>
    </citation>
    <scope>NUCLEOTIDE SEQUENCE [LARGE SCALE GENOMIC DNA]</scope>
    <source>
        <strain>H70</strain>
    </source>
</reference>
<proteinExistence type="inferred from homology"/>
<dbReference type="EMBL" id="FM204884">
    <property type="protein sequence ID" value="CAW97654.1"/>
    <property type="molecule type" value="Genomic_DNA"/>
</dbReference>
<dbReference type="SMR" id="C0MCB5"/>
<dbReference type="KEGG" id="seq:SZO_00550"/>
<dbReference type="eggNOG" id="COG0091">
    <property type="taxonomic scope" value="Bacteria"/>
</dbReference>
<dbReference type="HOGENOM" id="CLU_083987_3_3_9"/>
<dbReference type="Proteomes" id="UP000001368">
    <property type="component" value="Chromosome"/>
</dbReference>
<dbReference type="GO" id="GO:0022625">
    <property type="term" value="C:cytosolic large ribosomal subunit"/>
    <property type="evidence" value="ECO:0007669"/>
    <property type="project" value="TreeGrafter"/>
</dbReference>
<dbReference type="GO" id="GO:0019843">
    <property type="term" value="F:rRNA binding"/>
    <property type="evidence" value="ECO:0007669"/>
    <property type="project" value="UniProtKB-UniRule"/>
</dbReference>
<dbReference type="GO" id="GO:0003735">
    <property type="term" value="F:structural constituent of ribosome"/>
    <property type="evidence" value="ECO:0007669"/>
    <property type="project" value="InterPro"/>
</dbReference>
<dbReference type="GO" id="GO:0006412">
    <property type="term" value="P:translation"/>
    <property type="evidence" value="ECO:0007669"/>
    <property type="project" value="UniProtKB-UniRule"/>
</dbReference>
<dbReference type="CDD" id="cd00336">
    <property type="entry name" value="Ribosomal_L22"/>
    <property type="match status" value="1"/>
</dbReference>
<dbReference type="FunFam" id="3.90.470.10:FF:000001">
    <property type="entry name" value="50S ribosomal protein L22"/>
    <property type="match status" value="1"/>
</dbReference>
<dbReference type="Gene3D" id="3.90.470.10">
    <property type="entry name" value="Ribosomal protein L22/L17"/>
    <property type="match status" value="1"/>
</dbReference>
<dbReference type="HAMAP" id="MF_01331_B">
    <property type="entry name" value="Ribosomal_uL22_B"/>
    <property type="match status" value="1"/>
</dbReference>
<dbReference type="InterPro" id="IPR001063">
    <property type="entry name" value="Ribosomal_uL22"/>
</dbReference>
<dbReference type="InterPro" id="IPR005727">
    <property type="entry name" value="Ribosomal_uL22_bac/chlpt-type"/>
</dbReference>
<dbReference type="InterPro" id="IPR047867">
    <property type="entry name" value="Ribosomal_uL22_bac/org-type"/>
</dbReference>
<dbReference type="InterPro" id="IPR018260">
    <property type="entry name" value="Ribosomal_uL22_CS"/>
</dbReference>
<dbReference type="InterPro" id="IPR036394">
    <property type="entry name" value="Ribosomal_uL22_sf"/>
</dbReference>
<dbReference type="NCBIfam" id="TIGR01044">
    <property type="entry name" value="rplV_bact"/>
    <property type="match status" value="1"/>
</dbReference>
<dbReference type="PANTHER" id="PTHR13501">
    <property type="entry name" value="CHLOROPLAST 50S RIBOSOMAL PROTEIN L22-RELATED"/>
    <property type="match status" value="1"/>
</dbReference>
<dbReference type="PANTHER" id="PTHR13501:SF8">
    <property type="entry name" value="LARGE RIBOSOMAL SUBUNIT PROTEIN UL22M"/>
    <property type="match status" value="1"/>
</dbReference>
<dbReference type="Pfam" id="PF00237">
    <property type="entry name" value="Ribosomal_L22"/>
    <property type="match status" value="1"/>
</dbReference>
<dbReference type="SUPFAM" id="SSF54843">
    <property type="entry name" value="Ribosomal protein L22"/>
    <property type="match status" value="1"/>
</dbReference>
<dbReference type="PROSITE" id="PS00464">
    <property type="entry name" value="RIBOSOMAL_L22"/>
    <property type="match status" value="1"/>
</dbReference>
<comment type="function">
    <text evidence="1">This protein binds specifically to 23S rRNA; its binding is stimulated by other ribosomal proteins, e.g. L4, L17, and L20. It is important during the early stages of 50S assembly. It makes multiple contacts with different domains of the 23S rRNA in the assembled 50S subunit and ribosome (By similarity).</text>
</comment>
<comment type="function">
    <text evidence="1">The globular domain of the protein is located near the polypeptide exit tunnel on the outside of the subunit, while an extended beta-hairpin is found that lines the wall of the exit tunnel in the center of the 70S ribosome.</text>
</comment>
<comment type="subunit">
    <text evidence="1">Part of the 50S ribosomal subunit.</text>
</comment>
<comment type="similarity">
    <text evidence="1">Belongs to the universal ribosomal protein uL22 family.</text>
</comment>
<gene>
    <name evidence="1" type="primary">rplV</name>
    <name type="ordered locus">SZO_00550</name>
</gene>
<evidence type="ECO:0000255" key="1">
    <source>
        <dbReference type="HAMAP-Rule" id="MF_01331"/>
    </source>
</evidence>
<evidence type="ECO:0000305" key="2"/>